<reference key="1">
    <citation type="journal article" date="2011" name="J. Bacteriol.">
        <title>Comparative genomics of 28 Salmonella enterica isolates: evidence for CRISPR-mediated adaptive sublineage evolution.</title>
        <authorList>
            <person name="Fricke W.F."/>
            <person name="Mammel M.K."/>
            <person name="McDermott P.F."/>
            <person name="Tartera C."/>
            <person name="White D.G."/>
            <person name="Leclerc J.E."/>
            <person name="Ravel J."/>
            <person name="Cebula T.A."/>
        </authorList>
    </citation>
    <scope>NUCLEOTIDE SEQUENCE [LARGE SCALE GENOMIC DNA]</scope>
    <source>
        <strain>CVM19633</strain>
    </source>
</reference>
<gene>
    <name evidence="1" type="primary">rph</name>
    <name type="ordered locus">SeSA_A3933</name>
</gene>
<evidence type="ECO:0000255" key="1">
    <source>
        <dbReference type="HAMAP-Rule" id="MF_00564"/>
    </source>
</evidence>
<keyword id="KW-0548">Nucleotidyltransferase</keyword>
<keyword id="KW-0694">RNA-binding</keyword>
<keyword id="KW-0698">rRNA processing</keyword>
<keyword id="KW-0808">Transferase</keyword>
<keyword id="KW-0819">tRNA processing</keyword>
<keyword id="KW-0820">tRNA-binding</keyword>
<dbReference type="EC" id="2.7.7.56" evidence="1"/>
<dbReference type="EMBL" id="CP001127">
    <property type="protein sequence ID" value="ACF89916.1"/>
    <property type="molecule type" value="Genomic_DNA"/>
</dbReference>
<dbReference type="RefSeq" id="WP_001247078.1">
    <property type="nucleotide sequence ID" value="NC_011094.1"/>
</dbReference>
<dbReference type="SMR" id="B4TZY4"/>
<dbReference type="KEGG" id="sew:SeSA_A3933"/>
<dbReference type="HOGENOM" id="CLU_050858_0_0_6"/>
<dbReference type="Proteomes" id="UP000001865">
    <property type="component" value="Chromosome"/>
</dbReference>
<dbReference type="GO" id="GO:0000175">
    <property type="term" value="F:3'-5'-RNA exonuclease activity"/>
    <property type="evidence" value="ECO:0007669"/>
    <property type="project" value="UniProtKB-UniRule"/>
</dbReference>
<dbReference type="GO" id="GO:0000049">
    <property type="term" value="F:tRNA binding"/>
    <property type="evidence" value="ECO:0007669"/>
    <property type="project" value="UniProtKB-UniRule"/>
</dbReference>
<dbReference type="GO" id="GO:0009022">
    <property type="term" value="F:tRNA nucleotidyltransferase activity"/>
    <property type="evidence" value="ECO:0007669"/>
    <property type="project" value="UniProtKB-UniRule"/>
</dbReference>
<dbReference type="GO" id="GO:0016075">
    <property type="term" value="P:rRNA catabolic process"/>
    <property type="evidence" value="ECO:0007669"/>
    <property type="project" value="UniProtKB-UniRule"/>
</dbReference>
<dbReference type="GO" id="GO:0006364">
    <property type="term" value="P:rRNA processing"/>
    <property type="evidence" value="ECO:0007669"/>
    <property type="project" value="UniProtKB-KW"/>
</dbReference>
<dbReference type="GO" id="GO:0008033">
    <property type="term" value="P:tRNA processing"/>
    <property type="evidence" value="ECO:0007669"/>
    <property type="project" value="UniProtKB-UniRule"/>
</dbReference>
<dbReference type="CDD" id="cd11362">
    <property type="entry name" value="RNase_PH_bact"/>
    <property type="match status" value="1"/>
</dbReference>
<dbReference type="FunFam" id="3.30.230.70:FF:000003">
    <property type="entry name" value="Ribonuclease PH"/>
    <property type="match status" value="1"/>
</dbReference>
<dbReference type="Gene3D" id="3.30.230.70">
    <property type="entry name" value="GHMP Kinase, N-terminal domain"/>
    <property type="match status" value="1"/>
</dbReference>
<dbReference type="HAMAP" id="MF_00564">
    <property type="entry name" value="RNase_PH"/>
    <property type="match status" value="1"/>
</dbReference>
<dbReference type="InterPro" id="IPR001247">
    <property type="entry name" value="ExoRNase_PH_dom1"/>
</dbReference>
<dbReference type="InterPro" id="IPR015847">
    <property type="entry name" value="ExoRNase_PH_dom2"/>
</dbReference>
<dbReference type="InterPro" id="IPR036345">
    <property type="entry name" value="ExoRNase_PH_dom2_sf"/>
</dbReference>
<dbReference type="InterPro" id="IPR027408">
    <property type="entry name" value="PNPase/RNase_PH_dom_sf"/>
</dbReference>
<dbReference type="InterPro" id="IPR020568">
    <property type="entry name" value="Ribosomal_Su5_D2-typ_SF"/>
</dbReference>
<dbReference type="InterPro" id="IPR050080">
    <property type="entry name" value="RNase_PH"/>
</dbReference>
<dbReference type="InterPro" id="IPR002381">
    <property type="entry name" value="RNase_PH_bac-type"/>
</dbReference>
<dbReference type="InterPro" id="IPR018336">
    <property type="entry name" value="RNase_PH_CS"/>
</dbReference>
<dbReference type="NCBIfam" id="TIGR01966">
    <property type="entry name" value="RNasePH"/>
    <property type="match status" value="1"/>
</dbReference>
<dbReference type="PANTHER" id="PTHR11953">
    <property type="entry name" value="EXOSOME COMPLEX COMPONENT"/>
    <property type="match status" value="1"/>
</dbReference>
<dbReference type="PANTHER" id="PTHR11953:SF0">
    <property type="entry name" value="EXOSOME COMPLEX COMPONENT RRP41"/>
    <property type="match status" value="1"/>
</dbReference>
<dbReference type="Pfam" id="PF01138">
    <property type="entry name" value="RNase_PH"/>
    <property type="match status" value="1"/>
</dbReference>
<dbReference type="Pfam" id="PF03725">
    <property type="entry name" value="RNase_PH_C"/>
    <property type="match status" value="1"/>
</dbReference>
<dbReference type="SUPFAM" id="SSF55666">
    <property type="entry name" value="Ribonuclease PH domain 2-like"/>
    <property type="match status" value="1"/>
</dbReference>
<dbReference type="SUPFAM" id="SSF54211">
    <property type="entry name" value="Ribosomal protein S5 domain 2-like"/>
    <property type="match status" value="1"/>
</dbReference>
<dbReference type="PROSITE" id="PS01277">
    <property type="entry name" value="RIBONUCLEASE_PH"/>
    <property type="match status" value="1"/>
</dbReference>
<accession>B4TZY4</accession>
<name>RNPH_SALSV</name>
<sequence length="238" mass="25269">MRPAGRSANQVRPVTLTRNYTKHAEGSVLVEFGDTKVLCTASIEEGVPRFLKGQGQGWITAEYGMLPRATHTRNAREAAKGKQGGRTMEIQRLIARALRAAVDLKTLGEFTITLDCDVIQADGGTRTASITGACVALADALNKLVANGKLKTNPMKGMVAAVSVGIVNGEAICDLEYVEDSAAETDMNVVMTEDGRIIEVQGTAEGEPFSHEELLTLLALARGGIESIVATQKAALEN</sequence>
<protein>
    <recommendedName>
        <fullName evidence="1">Ribonuclease PH</fullName>
        <shortName evidence="1">RNase PH</shortName>
        <ecNumber evidence="1">2.7.7.56</ecNumber>
    </recommendedName>
    <alternativeName>
        <fullName evidence="1">tRNA nucleotidyltransferase</fullName>
    </alternativeName>
</protein>
<organism>
    <name type="scientific">Salmonella schwarzengrund (strain CVM19633)</name>
    <dbReference type="NCBI Taxonomy" id="439843"/>
    <lineage>
        <taxon>Bacteria</taxon>
        <taxon>Pseudomonadati</taxon>
        <taxon>Pseudomonadota</taxon>
        <taxon>Gammaproteobacteria</taxon>
        <taxon>Enterobacterales</taxon>
        <taxon>Enterobacteriaceae</taxon>
        <taxon>Salmonella</taxon>
    </lineage>
</organism>
<proteinExistence type="inferred from homology"/>
<feature type="chain" id="PRO_1000129372" description="Ribonuclease PH">
    <location>
        <begin position="1"/>
        <end position="238"/>
    </location>
</feature>
<feature type="binding site" evidence="1">
    <location>
        <position position="86"/>
    </location>
    <ligand>
        <name>phosphate</name>
        <dbReference type="ChEBI" id="CHEBI:43474"/>
        <note>substrate</note>
    </ligand>
</feature>
<feature type="binding site" evidence="1">
    <location>
        <begin position="124"/>
        <end position="126"/>
    </location>
    <ligand>
        <name>phosphate</name>
        <dbReference type="ChEBI" id="CHEBI:43474"/>
        <note>substrate</note>
    </ligand>
</feature>
<comment type="function">
    <text evidence="1">Phosphorolytic 3'-5' exoribonuclease that plays an important role in tRNA 3'-end maturation. Removes nucleotide residues following the 3'-CCA terminus of tRNAs; can also add nucleotides to the ends of RNA molecules by using nucleoside diphosphates as substrates, but this may not be physiologically important. Probably plays a role in initiation of 16S rRNA degradation (leading to ribosome degradation) during starvation.</text>
</comment>
<comment type="catalytic activity">
    <reaction evidence="1">
        <text>tRNA(n+1) + phosphate = tRNA(n) + a ribonucleoside 5'-diphosphate</text>
        <dbReference type="Rhea" id="RHEA:10628"/>
        <dbReference type="Rhea" id="RHEA-COMP:17343"/>
        <dbReference type="Rhea" id="RHEA-COMP:17344"/>
        <dbReference type="ChEBI" id="CHEBI:43474"/>
        <dbReference type="ChEBI" id="CHEBI:57930"/>
        <dbReference type="ChEBI" id="CHEBI:173114"/>
        <dbReference type="EC" id="2.7.7.56"/>
    </reaction>
</comment>
<comment type="subunit">
    <text evidence="1">Homohexameric ring arranged as a trimer of dimers.</text>
</comment>
<comment type="similarity">
    <text evidence="1">Belongs to the RNase PH family.</text>
</comment>